<feature type="chain" id="PRO_1000099752" description="3-phosphoshikimate 1-carboxyvinyltransferase">
    <location>
        <begin position="1"/>
        <end position="426"/>
    </location>
</feature>
<feature type="active site" description="Proton acceptor" evidence="1">
    <location>
        <position position="314"/>
    </location>
</feature>
<feature type="binding site" evidence="1">
    <location>
        <position position="22"/>
    </location>
    <ligand>
        <name>3-phosphoshikimate</name>
        <dbReference type="ChEBI" id="CHEBI:145989"/>
    </ligand>
</feature>
<feature type="binding site" evidence="1">
    <location>
        <position position="22"/>
    </location>
    <ligand>
        <name>phosphoenolpyruvate</name>
        <dbReference type="ChEBI" id="CHEBI:58702"/>
    </ligand>
</feature>
<feature type="binding site" evidence="1">
    <location>
        <position position="23"/>
    </location>
    <ligand>
        <name>3-phosphoshikimate</name>
        <dbReference type="ChEBI" id="CHEBI:145989"/>
    </ligand>
</feature>
<feature type="binding site" evidence="1">
    <location>
        <position position="27"/>
    </location>
    <ligand>
        <name>3-phosphoshikimate</name>
        <dbReference type="ChEBI" id="CHEBI:145989"/>
    </ligand>
</feature>
<feature type="binding site" evidence="1">
    <location>
        <position position="96"/>
    </location>
    <ligand>
        <name>phosphoenolpyruvate</name>
        <dbReference type="ChEBI" id="CHEBI:58702"/>
    </ligand>
</feature>
<feature type="binding site" evidence="1">
    <location>
        <position position="124"/>
    </location>
    <ligand>
        <name>phosphoenolpyruvate</name>
        <dbReference type="ChEBI" id="CHEBI:58702"/>
    </ligand>
</feature>
<feature type="binding site" evidence="1">
    <location>
        <position position="170"/>
    </location>
    <ligand>
        <name>3-phosphoshikimate</name>
        <dbReference type="ChEBI" id="CHEBI:145989"/>
    </ligand>
</feature>
<feature type="binding site" evidence="1">
    <location>
        <position position="171"/>
    </location>
    <ligand>
        <name>3-phosphoshikimate</name>
        <dbReference type="ChEBI" id="CHEBI:145989"/>
    </ligand>
</feature>
<feature type="binding site" evidence="1">
    <location>
        <position position="172"/>
    </location>
    <ligand>
        <name>3-phosphoshikimate</name>
        <dbReference type="ChEBI" id="CHEBI:145989"/>
    </ligand>
</feature>
<feature type="binding site" evidence="1">
    <location>
        <position position="172"/>
    </location>
    <ligand>
        <name>phosphoenolpyruvate</name>
        <dbReference type="ChEBI" id="CHEBI:58702"/>
    </ligand>
</feature>
<feature type="binding site" evidence="1">
    <location>
        <position position="198"/>
    </location>
    <ligand>
        <name>3-phosphoshikimate</name>
        <dbReference type="ChEBI" id="CHEBI:145989"/>
    </ligand>
</feature>
<feature type="binding site" evidence="1">
    <location>
        <position position="314"/>
    </location>
    <ligand>
        <name>3-phosphoshikimate</name>
        <dbReference type="ChEBI" id="CHEBI:145989"/>
    </ligand>
</feature>
<feature type="binding site" evidence="1">
    <location>
        <position position="337"/>
    </location>
    <ligand>
        <name>3-phosphoshikimate</name>
        <dbReference type="ChEBI" id="CHEBI:145989"/>
    </ligand>
</feature>
<feature type="binding site" evidence="1">
    <location>
        <position position="341"/>
    </location>
    <ligand>
        <name>3-phosphoshikimate</name>
        <dbReference type="ChEBI" id="CHEBI:145989"/>
    </ligand>
</feature>
<feature type="binding site" evidence="1">
    <location>
        <position position="345"/>
    </location>
    <ligand>
        <name>phosphoenolpyruvate</name>
        <dbReference type="ChEBI" id="CHEBI:58702"/>
    </ligand>
</feature>
<feature type="binding site" evidence="1">
    <location>
        <position position="387"/>
    </location>
    <ligand>
        <name>phosphoenolpyruvate</name>
        <dbReference type="ChEBI" id="CHEBI:58702"/>
    </ligand>
</feature>
<feature type="binding site" evidence="1">
    <location>
        <position position="412"/>
    </location>
    <ligand>
        <name>phosphoenolpyruvate</name>
        <dbReference type="ChEBI" id="CHEBI:58702"/>
    </ligand>
</feature>
<organism>
    <name type="scientific">Shewanella woodyi (strain ATCC 51908 / MS32)</name>
    <dbReference type="NCBI Taxonomy" id="392500"/>
    <lineage>
        <taxon>Bacteria</taxon>
        <taxon>Pseudomonadati</taxon>
        <taxon>Pseudomonadota</taxon>
        <taxon>Gammaproteobacteria</taxon>
        <taxon>Alteromonadales</taxon>
        <taxon>Shewanellaceae</taxon>
        <taxon>Shewanella</taxon>
    </lineage>
</organism>
<comment type="function">
    <text evidence="1">Catalyzes the transfer of the enolpyruvyl moiety of phosphoenolpyruvate (PEP) to the 5-hydroxyl of shikimate-3-phosphate (S3P) to produce enolpyruvyl shikimate-3-phosphate and inorganic phosphate.</text>
</comment>
<comment type="catalytic activity">
    <reaction evidence="1">
        <text>3-phosphoshikimate + phosphoenolpyruvate = 5-O-(1-carboxyvinyl)-3-phosphoshikimate + phosphate</text>
        <dbReference type="Rhea" id="RHEA:21256"/>
        <dbReference type="ChEBI" id="CHEBI:43474"/>
        <dbReference type="ChEBI" id="CHEBI:57701"/>
        <dbReference type="ChEBI" id="CHEBI:58702"/>
        <dbReference type="ChEBI" id="CHEBI:145989"/>
        <dbReference type="EC" id="2.5.1.19"/>
    </reaction>
    <physiologicalReaction direction="left-to-right" evidence="1">
        <dbReference type="Rhea" id="RHEA:21257"/>
    </physiologicalReaction>
</comment>
<comment type="pathway">
    <text evidence="1">Metabolic intermediate biosynthesis; chorismate biosynthesis; chorismate from D-erythrose 4-phosphate and phosphoenolpyruvate: step 6/7.</text>
</comment>
<comment type="subunit">
    <text evidence="1">Monomer.</text>
</comment>
<comment type="subcellular location">
    <subcellularLocation>
        <location evidence="1">Cytoplasm</location>
    </subcellularLocation>
</comment>
<comment type="similarity">
    <text evidence="1">Belongs to the EPSP synthase family.</text>
</comment>
<proteinExistence type="inferred from homology"/>
<keyword id="KW-0028">Amino-acid biosynthesis</keyword>
<keyword id="KW-0057">Aromatic amino acid biosynthesis</keyword>
<keyword id="KW-0963">Cytoplasm</keyword>
<keyword id="KW-1185">Reference proteome</keyword>
<keyword id="KW-0808">Transferase</keyword>
<accession>B1KF47</accession>
<evidence type="ECO:0000255" key="1">
    <source>
        <dbReference type="HAMAP-Rule" id="MF_00210"/>
    </source>
</evidence>
<sequence length="426" mass="45925">MKQLRLETINKVQGTVNIPGSKSISNRALLLATLAKGTTTLTNLLDSDDIRYMLASLKQLGVNYRLSEDKTVCELDGLGAPINSNVAQTLFLGNAGTAMRPLCAALTLGEGEFILTGEPRMEERPIGDLVDALRQLGAEVTYLKSEGFPPLTINATGLNAGDVEIAGDLSSQFLTALLMVSPLAKGDVNIKIKGELVSKPYIDITLALMAQFGVKVINHDYERFEIKSGQSYVSPGKVLVEGDASSASYFLAAGAIKGGEVKVTGVGRLSIQGDVKFADVLEKMGAEIEWGDDYIISRVAKLNAVDLDMNHIPDAAMTIATAALFATGTTHIRNIYNWRIKETDRLAAMATELRKVGAIVDEGHDYISVTPPTKPHTANIDTYNDHRMAMCFSMLAFADCGITINDPDCTSKTFPDYFEQFAALAC</sequence>
<name>AROA_SHEWM</name>
<reference key="1">
    <citation type="submission" date="2008-02" db="EMBL/GenBank/DDBJ databases">
        <title>Complete sequence of Shewanella woodyi ATCC 51908.</title>
        <authorList>
            <consortium name="US DOE Joint Genome Institute"/>
            <person name="Copeland A."/>
            <person name="Lucas S."/>
            <person name="Lapidus A."/>
            <person name="Glavina del Rio T."/>
            <person name="Dalin E."/>
            <person name="Tice H."/>
            <person name="Bruce D."/>
            <person name="Goodwin L."/>
            <person name="Pitluck S."/>
            <person name="Sims D."/>
            <person name="Brettin T."/>
            <person name="Detter J.C."/>
            <person name="Han C."/>
            <person name="Kuske C.R."/>
            <person name="Schmutz J."/>
            <person name="Larimer F."/>
            <person name="Land M."/>
            <person name="Hauser L."/>
            <person name="Kyrpides N."/>
            <person name="Lykidis A."/>
            <person name="Zhao J.-S."/>
            <person name="Richardson P."/>
        </authorList>
    </citation>
    <scope>NUCLEOTIDE SEQUENCE [LARGE SCALE GENOMIC DNA]</scope>
    <source>
        <strain>ATCC 51908 / MS32</strain>
    </source>
</reference>
<gene>
    <name evidence="1" type="primary">aroA</name>
    <name type="ordered locus">Swoo_2309</name>
</gene>
<protein>
    <recommendedName>
        <fullName evidence="1">3-phosphoshikimate 1-carboxyvinyltransferase</fullName>
        <ecNumber evidence="1">2.5.1.19</ecNumber>
    </recommendedName>
    <alternativeName>
        <fullName evidence="1">5-enolpyruvylshikimate-3-phosphate synthase</fullName>
        <shortName evidence="1">EPSP synthase</shortName>
        <shortName evidence="1">EPSPS</shortName>
    </alternativeName>
</protein>
<dbReference type="EC" id="2.5.1.19" evidence="1"/>
<dbReference type="EMBL" id="CP000961">
    <property type="protein sequence ID" value="ACA86588.1"/>
    <property type="molecule type" value="Genomic_DNA"/>
</dbReference>
<dbReference type="RefSeq" id="WP_012324930.1">
    <property type="nucleotide sequence ID" value="NC_010506.1"/>
</dbReference>
<dbReference type="SMR" id="B1KF47"/>
<dbReference type="STRING" id="392500.Swoo_2309"/>
<dbReference type="KEGG" id="swd:Swoo_2309"/>
<dbReference type="eggNOG" id="COG0128">
    <property type="taxonomic scope" value="Bacteria"/>
</dbReference>
<dbReference type="HOGENOM" id="CLU_024321_0_0_6"/>
<dbReference type="UniPathway" id="UPA00053">
    <property type="reaction ID" value="UER00089"/>
</dbReference>
<dbReference type="Proteomes" id="UP000002168">
    <property type="component" value="Chromosome"/>
</dbReference>
<dbReference type="GO" id="GO:0005737">
    <property type="term" value="C:cytoplasm"/>
    <property type="evidence" value="ECO:0007669"/>
    <property type="project" value="UniProtKB-SubCell"/>
</dbReference>
<dbReference type="GO" id="GO:0003866">
    <property type="term" value="F:3-phosphoshikimate 1-carboxyvinyltransferase activity"/>
    <property type="evidence" value="ECO:0007669"/>
    <property type="project" value="UniProtKB-UniRule"/>
</dbReference>
<dbReference type="GO" id="GO:0008652">
    <property type="term" value="P:amino acid biosynthetic process"/>
    <property type="evidence" value="ECO:0007669"/>
    <property type="project" value="UniProtKB-KW"/>
</dbReference>
<dbReference type="GO" id="GO:0009073">
    <property type="term" value="P:aromatic amino acid family biosynthetic process"/>
    <property type="evidence" value="ECO:0007669"/>
    <property type="project" value="UniProtKB-KW"/>
</dbReference>
<dbReference type="GO" id="GO:0009423">
    <property type="term" value="P:chorismate biosynthetic process"/>
    <property type="evidence" value="ECO:0007669"/>
    <property type="project" value="UniProtKB-UniRule"/>
</dbReference>
<dbReference type="CDD" id="cd01556">
    <property type="entry name" value="EPSP_synthase"/>
    <property type="match status" value="1"/>
</dbReference>
<dbReference type="FunFam" id="3.65.10.10:FF:000003">
    <property type="entry name" value="3-phosphoshikimate 1-carboxyvinyltransferase"/>
    <property type="match status" value="1"/>
</dbReference>
<dbReference type="FunFam" id="3.65.10.10:FF:000004">
    <property type="entry name" value="3-phosphoshikimate 1-carboxyvinyltransferase"/>
    <property type="match status" value="1"/>
</dbReference>
<dbReference type="Gene3D" id="3.65.10.10">
    <property type="entry name" value="Enolpyruvate transferase domain"/>
    <property type="match status" value="2"/>
</dbReference>
<dbReference type="HAMAP" id="MF_00210">
    <property type="entry name" value="EPSP_synth"/>
    <property type="match status" value="1"/>
</dbReference>
<dbReference type="InterPro" id="IPR001986">
    <property type="entry name" value="Enolpyruvate_Tfrase_dom"/>
</dbReference>
<dbReference type="InterPro" id="IPR036968">
    <property type="entry name" value="Enolpyruvate_Tfrase_sf"/>
</dbReference>
<dbReference type="InterPro" id="IPR006264">
    <property type="entry name" value="EPSP_synthase"/>
</dbReference>
<dbReference type="InterPro" id="IPR023193">
    <property type="entry name" value="EPSP_synthase_CS"/>
</dbReference>
<dbReference type="InterPro" id="IPR013792">
    <property type="entry name" value="RNA3'P_cycl/enolpyr_Trfase_a/b"/>
</dbReference>
<dbReference type="NCBIfam" id="TIGR01356">
    <property type="entry name" value="aroA"/>
    <property type="match status" value="1"/>
</dbReference>
<dbReference type="PANTHER" id="PTHR21090">
    <property type="entry name" value="AROM/DEHYDROQUINATE SYNTHASE"/>
    <property type="match status" value="1"/>
</dbReference>
<dbReference type="PANTHER" id="PTHR21090:SF5">
    <property type="entry name" value="PENTAFUNCTIONAL AROM POLYPEPTIDE"/>
    <property type="match status" value="1"/>
</dbReference>
<dbReference type="Pfam" id="PF00275">
    <property type="entry name" value="EPSP_synthase"/>
    <property type="match status" value="1"/>
</dbReference>
<dbReference type="PIRSF" id="PIRSF000505">
    <property type="entry name" value="EPSPS"/>
    <property type="match status" value="1"/>
</dbReference>
<dbReference type="SUPFAM" id="SSF55205">
    <property type="entry name" value="EPT/RTPC-like"/>
    <property type="match status" value="1"/>
</dbReference>
<dbReference type="PROSITE" id="PS00104">
    <property type="entry name" value="EPSP_SYNTHASE_1"/>
    <property type="match status" value="1"/>
</dbReference>
<dbReference type="PROSITE" id="PS00885">
    <property type="entry name" value="EPSP_SYNTHASE_2"/>
    <property type="match status" value="1"/>
</dbReference>